<feature type="chain" id="PRO_1000214191" description="Type III pantothenate kinase">
    <location>
        <begin position="1"/>
        <end position="261"/>
    </location>
</feature>
<feature type="active site" description="Proton acceptor" evidence="1">
    <location>
        <position position="109"/>
    </location>
</feature>
<feature type="binding site" evidence="1">
    <location>
        <begin position="6"/>
        <end position="13"/>
    </location>
    <ligand>
        <name>ATP</name>
        <dbReference type="ChEBI" id="CHEBI:30616"/>
    </ligand>
</feature>
<feature type="binding site" evidence="1">
    <location>
        <begin position="107"/>
        <end position="110"/>
    </location>
    <ligand>
        <name>substrate</name>
    </ligand>
</feature>
<feature type="binding site" evidence="1">
    <location>
        <position position="129"/>
    </location>
    <ligand>
        <name>K(+)</name>
        <dbReference type="ChEBI" id="CHEBI:29103"/>
    </ligand>
</feature>
<feature type="binding site" evidence="1">
    <location>
        <position position="132"/>
    </location>
    <ligand>
        <name>ATP</name>
        <dbReference type="ChEBI" id="CHEBI:30616"/>
    </ligand>
</feature>
<feature type="binding site" evidence="1">
    <location>
        <position position="183"/>
    </location>
    <ligand>
        <name>substrate</name>
    </ligand>
</feature>
<gene>
    <name evidence="1" type="primary">coaX</name>
    <name type="ordered locus">Kole_1748</name>
</gene>
<protein>
    <recommendedName>
        <fullName evidence="1">Type III pantothenate kinase</fullName>
        <ecNumber evidence="1">2.7.1.33</ecNumber>
    </recommendedName>
    <alternativeName>
        <fullName evidence="1">PanK-III</fullName>
    </alternativeName>
    <alternativeName>
        <fullName evidence="1">Pantothenic acid kinase</fullName>
    </alternativeName>
</protein>
<name>COAX_KOSOT</name>
<sequence>MKLVADVGNTNTVFGIWNRGKILKNWRISTGRLETEDEMYVVLKQLLEAGNVDLKSIEDICVASVVPRLNSIFHYFGRKYLELDPVLVTAIDGIGVKWDVDFPSEIGADRVANVIGAHEFYGKDAIVIDTGTAITVDVLKDGAFIGGAILPGPMMAMRALFSKTAKLPEVDLFYVENHIGKNTEDNIRIGVVNGTYYALKAIISKVKEELGDKIPVIATGGNSPMFNIGNGFFDILDSDLTLKGIAVFCERVRKLEKNSAG</sequence>
<keyword id="KW-0067">ATP-binding</keyword>
<keyword id="KW-0173">Coenzyme A biosynthesis</keyword>
<keyword id="KW-0963">Cytoplasm</keyword>
<keyword id="KW-0418">Kinase</keyword>
<keyword id="KW-0479">Metal-binding</keyword>
<keyword id="KW-0547">Nucleotide-binding</keyword>
<keyword id="KW-0630">Potassium</keyword>
<keyword id="KW-1185">Reference proteome</keyword>
<keyword id="KW-0808">Transferase</keyword>
<accession>C5CFU0</accession>
<proteinExistence type="inferred from homology"/>
<reference key="1">
    <citation type="submission" date="2009-06" db="EMBL/GenBank/DDBJ databases">
        <title>Complete sequence of Thermotogales bacterium TBF 19.5.1.</title>
        <authorList>
            <consortium name="US DOE Joint Genome Institute"/>
            <person name="Lucas S."/>
            <person name="Copeland A."/>
            <person name="Lapidus A."/>
            <person name="Glavina del Rio T."/>
            <person name="Tice H."/>
            <person name="Bruce D."/>
            <person name="Goodwin L."/>
            <person name="Pitluck S."/>
            <person name="Chertkov O."/>
            <person name="Brettin T."/>
            <person name="Detter J.C."/>
            <person name="Han C."/>
            <person name="Schmutz J."/>
            <person name="Larimer F."/>
            <person name="Land M."/>
            <person name="Hauser L."/>
            <person name="Kyrpides N."/>
            <person name="Ovchinnikova G."/>
            <person name="Noll K."/>
        </authorList>
    </citation>
    <scope>NUCLEOTIDE SEQUENCE [LARGE SCALE GENOMIC DNA]</scope>
    <source>
        <strain>ATCC BAA-1733 / DSM 21960 / TBF 19.5.1</strain>
    </source>
</reference>
<dbReference type="EC" id="2.7.1.33" evidence="1"/>
<dbReference type="EMBL" id="CP001634">
    <property type="protein sequence ID" value="ACR80434.1"/>
    <property type="molecule type" value="Genomic_DNA"/>
</dbReference>
<dbReference type="RefSeq" id="WP_015869078.1">
    <property type="nucleotide sequence ID" value="NC_012785.1"/>
</dbReference>
<dbReference type="SMR" id="C5CFU0"/>
<dbReference type="STRING" id="521045.Kole_1748"/>
<dbReference type="KEGG" id="kol:Kole_1748"/>
<dbReference type="eggNOG" id="COG1521">
    <property type="taxonomic scope" value="Bacteria"/>
</dbReference>
<dbReference type="HOGENOM" id="CLU_066627_1_0_0"/>
<dbReference type="OrthoDB" id="9804707at2"/>
<dbReference type="UniPathway" id="UPA00241">
    <property type="reaction ID" value="UER00352"/>
</dbReference>
<dbReference type="Proteomes" id="UP000002382">
    <property type="component" value="Chromosome"/>
</dbReference>
<dbReference type="GO" id="GO:0005737">
    <property type="term" value="C:cytoplasm"/>
    <property type="evidence" value="ECO:0007669"/>
    <property type="project" value="UniProtKB-SubCell"/>
</dbReference>
<dbReference type="GO" id="GO:0005524">
    <property type="term" value="F:ATP binding"/>
    <property type="evidence" value="ECO:0007669"/>
    <property type="project" value="UniProtKB-UniRule"/>
</dbReference>
<dbReference type="GO" id="GO:0046872">
    <property type="term" value="F:metal ion binding"/>
    <property type="evidence" value="ECO:0007669"/>
    <property type="project" value="UniProtKB-KW"/>
</dbReference>
<dbReference type="GO" id="GO:0004594">
    <property type="term" value="F:pantothenate kinase activity"/>
    <property type="evidence" value="ECO:0007669"/>
    <property type="project" value="UniProtKB-UniRule"/>
</dbReference>
<dbReference type="GO" id="GO:0015937">
    <property type="term" value="P:coenzyme A biosynthetic process"/>
    <property type="evidence" value="ECO:0007669"/>
    <property type="project" value="UniProtKB-UniRule"/>
</dbReference>
<dbReference type="CDD" id="cd24015">
    <property type="entry name" value="ASKHA_NBD_PanK-III"/>
    <property type="match status" value="1"/>
</dbReference>
<dbReference type="Gene3D" id="3.30.420.40">
    <property type="match status" value="2"/>
</dbReference>
<dbReference type="HAMAP" id="MF_01274">
    <property type="entry name" value="Pantothen_kinase_3"/>
    <property type="match status" value="1"/>
</dbReference>
<dbReference type="InterPro" id="IPR043129">
    <property type="entry name" value="ATPase_NBD"/>
</dbReference>
<dbReference type="InterPro" id="IPR004619">
    <property type="entry name" value="Type_III_PanK"/>
</dbReference>
<dbReference type="NCBIfam" id="TIGR00671">
    <property type="entry name" value="baf"/>
    <property type="match status" value="1"/>
</dbReference>
<dbReference type="NCBIfam" id="NF009848">
    <property type="entry name" value="PRK13318.1-6"/>
    <property type="match status" value="1"/>
</dbReference>
<dbReference type="PANTHER" id="PTHR34265">
    <property type="entry name" value="TYPE III PANTOTHENATE KINASE"/>
    <property type="match status" value="1"/>
</dbReference>
<dbReference type="PANTHER" id="PTHR34265:SF1">
    <property type="entry name" value="TYPE III PANTOTHENATE KINASE"/>
    <property type="match status" value="1"/>
</dbReference>
<dbReference type="Pfam" id="PF03309">
    <property type="entry name" value="Pan_kinase"/>
    <property type="match status" value="1"/>
</dbReference>
<dbReference type="SUPFAM" id="SSF53067">
    <property type="entry name" value="Actin-like ATPase domain"/>
    <property type="match status" value="2"/>
</dbReference>
<organism>
    <name type="scientific">Kosmotoga olearia (strain ATCC BAA-1733 / DSM 21960 / TBF 19.5.1)</name>
    <dbReference type="NCBI Taxonomy" id="521045"/>
    <lineage>
        <taxon>Bacteria</taxon>
        <taxon>Thermotogati</taxon>
        <taxon>Thermotogota</taxon>
        <taxon>Thermotogae</taxon>
        <taxon>Kosmotogales</taxon>
        <taxon>Kosmotogaceae</taxon>
        <taxon>Kosmotoga</taxon>
    </lineage>
</organism>
<evidence type="ECO:0000255" key="1">
    <source>
        <dbReference type="HAMAP-Rule" id="MF_01274"/>
    </source>
</evidence>
<comment type="function">
    <text evidence="1">Catalyzes the phosphorylation of pantothenate (Pan), the first step in CoA biosynthesis.</text>
</comment>
<comment type="catalytic activity">
    <reaction evidence="1">
        <text>(R)-pantothenate + ATP = (R)-4'-phosphopantothenate + ADP + H(+)</text>
        <dbReference type="Rhea" id="RHEA:16373"/>
        <dbReference type="ChEBI" id="CHEBI:10986"/>
        <dbReference type="ChEBI" id="CHEBI:15378"/>
        <dbReference type="ChEBI" id="CHEBI:29032"/>
        <dbReference type="ChEBI" id="CHEBI:30616"/>
        <dbReference type="ChEBI" id="CHEBI:456216"/>
        <dbReference type="EC" id="2.7.1.33"/>
    </reaction>
</comment>
<comment type="cofactor">
    <cofactor evidence="1">
        <name>NH4(+)</name>
        <dbReference type="ChEBI" id="CHEBI:28938"/>
    </cofactor>
    <cofactor evidence="1">
        <name>K(+)</name>
        <dbReference type="ChEBI" id="CHEBI:29103"/>
    </cofactor>
    <text evidence="1">A monovalent cation. Ammonium or potassium.</text>
</comment>
<comment type="pathway">
    <text evidence="1">Cofactor biosynthesis; coenzyme A biosynthesis; CoA from (R)-pantothenate: step 1/5.</text>
</comment>
<comment type="subunit">
    <text evidence="1">Homodimer.</text>
</comment>
<comment type="subcellular location">
    <subcellularLocation>
        <location evidence="1">Cytoplasm</location>
    </subcellularLocation>
</comment>
<comment type="similarity">
    <text evidence="1">Belongs to the type III pantothenate kinase family.</text>
</comment>